<accession>Q9UQL6</accession>
<accession>C9JFV9</accession>
<accession>O60340</accession>
<accession>O60528</accession>
<accession>Q96DY4</accession>
<keyword id="KW-0002">3D-structure</keyword>
<keyword id="KW-0007">Acetylation</keyword>
<keyword id="KW-0025">Alternative splicing</keyword>
<keyword id="KW-0156">Chromatin regulator</keyword>
<keyword id="KW-0963">Cytoplasm</keyword>
<keyword id="KW-0378">Hydrolase</keyword>
<keyword id="KW-1017">Isopeptide bond</keyword>
<keyword id="KW-0479">Metal-binding</keyword>
<keyword id="KW-0539">Nucleus</keyword>
<keyword id="KW-0597">Phosphoprotein</keyword>
<keyword id="KW-1267">Proteomics identification</keyword>
<keyword id="KW-1185">Reference proteome</keyword>
<keyword id="KW-0678">Repressor</keyword>
<keyword id="KW-0804">Transcription</keyword>
<keyword id="KW-0805">Transcription regulation</keyword>
<keyword id="KW-0832">Ubl conjugation</keyword>
<keyword id="KW-0862">Zinc</keyword>
<comment type="function">
    <text evidence="17 19">Responsible for the deacetylation of lysine residues on the N-terminal part of the core histones (H2A, H2B, H3 and H4). Histone deacetylation gives a tag for epigenetic repression and plays an important role in transcriptional regulation, cell cycle progression and developmental events. Histone deacetylases act via the formation of large multiprotein complexes. Involved in muscle maturation by repressing transcription of myocyte enhancer MEF2C. During muscle differentiation, it shuttles into the cytoplasm, allowing the expression of myocyte enhancer factors. Involved in the MTA1-mediated epigenetic regulation of ESR1 expression in breast cancer. Serves as a corepressor of RARA and causes its deacetylation (PubMed:28167758). In association with RARA, plays a role in the repression of microRNA-10a and thereby in the inflammatory response (PubMed:28167758).</text>
</comment>
<comment type="catalytic activity">
    <reaction>
        <text>N(6)-acetyl-L-lysyl-[histone] + H2O = L-lysyl-[histone] + acetate</text>
        <dbReference type="Rhea" id="RHEA:58196"/>
        <dbReference type="Rhea" id="RHEA-COMP:9845"/>
        <dbReference type="Rhea" id="RHEA-COMP:11338"/>
        <dbReference type="ChEBI" id="CHEBI:15377"/>
        <dbReference type="ChEBI" id="CHEBI:29969"/>
        <dbReference type="ChEBI" id="CHEBI:30089"/>
        <dbReference type="ChEBI" id="CHEBI:61930"/>
        <dbReference type="EC" id="3.5.1.98"/>
    </reaction>
</comment>
<comment type="subunit">
    <text evidence="2 4 6 9 10 11 14 16 17 18 19">Interacts with AHRR, BAHD1, BCOR, HDAC7, HDAC9, CTBP1, MEF2C, NCOR2, NRIP1, PHB2 and a 14-3-3 chaperone protein. Interacts with BCL6, DDIT3/CHOP, GRK5, KDM5B and MYOCD. Interacts with EP300 in the presence of TFAP2C. Interacts with ANKRA2. Interacts with CUL7 (as part of the 3M complex); negatively regulated by ANKRA2. Interacts with ZBTB7B; the interaction allows the recruitment of HDAC4 on CD8 loci for deacetylation and possible inhibition of CD8 genes expression (By similarity). Interacts with RARA (PubMed:28167758).</text>
</comment>
<comment type="interaction">
    <interactant intactId="EBI-715576">
        <id>Q9UQL6</id>
    </interactant>
    <interactant intactId="EBI-10215533">
        <id>Q9H9E1</id>
        <label>ANKRA2</label>
    </interactant>
    <organismsDiffer>false</organismsDiffer>
    <experiments>2</experiments>
</comment>
<comment type="interaction">
    <interactant intactId="EBI-715576">
        <id>Q9UQL6</id>
    </interactant>
    <interactant intactId="EBI-714781">
        <id>Q9HCU9</id>
        <label>BRMS1</label>
    </interactant>
    <organismsDiffer>false</organismsDiffer>
    <experiments>2</experiments>
</comment>
<comment type="interaction">
    <interactant intactId="EBI-715576">
        <id>Q9UQL6</id>
    </interactant>
    <interactant intactId="EBI-6664760">
        <id>P23771</id>
        <label>GATA3</label>
    </interactant>
    <organismsDiffer>false</organismsDiffer>
    <experiments>4</experiments>
</comment>
<comment type="interaction">
    <interactant intactId="EBI-715576">
        <id>Q9UQL6</id>
    </interactant>
    <interactant intactId="EBI-715576">
        <id>Q9UQL6</id>
        <label>HDAC5</label>
    </interactant>
    <organismsDiffer>false</organismsDiffer>
    <experiments>3</experiments>
</comment>
<comment type="interaction">
    <interactant intactId="EBI-715576">
        <id>Q9UQL6</id>
    </interactant>
    <interactant intactId="EBI-11959475">
        <id>P25791-3</id>
        <label>LMO2</label>
    </interactant>
    <organismsDiffer>false</organismsDiffer>
    <experiments>3</experiments>
</comment>
<comment type="interaction">
    <interactant intactId="EBI-715576">
        <id>Q9UQL6</id>
    </interactant>
    <interactant intactId="EBI-2684075">
        <id>Q06413</id>
        <label>MEF2C</label>
    </interactant>
    <organismsDiffer>false</organismsDiffer>
    <experiments>3</experiments>
</comment>
<comment type="interaction">
    <interactant intactId="EBI-715576">
        <id>Q9UQL6</id>
    </interactant>
    <interactant intactId="EBI-925990">
        <id>Q13761</id>
        <label>RUNX3</label>
    </interactant>
    <organismsDiffer>false</organismsDiffer>
    <experiments>5</experiments>
</comment>
<comment type="interaction">
    <interactant intactId="EBI-715576">
        <id>Q9UQL6</id>
    </interactant>
    <interactant intactId="EBI-476295">
        <id>P31947</id>
        <label>SFN</label>
    </interactant>
    <organismsDiffer>false</organismsDiffer>
    <experiments>3</experiments>
</comment>
<comment type="interaction">
    <interactant intactId="EBI-715576">
        <id>Q9UQL6</id>
    </interactant>
    <interactant intactId="EBI-347088">
        <id>P63104</id>
        <label>YWHAZ</label>
    </interactant>
    <organismsDiffer>false</organismsDiffer>
    <experiments>5</experiments>
</comment>
<comment type="interaction">
    <interactant intactId="EBI-715576">
        <id>Q9UQL6</id>
    </interactant>
    <interactant intactId="EBI-8367081">
        <id>Q8VEB1</id>
        <label>Grk5</label>
    </interactant>
    <organismsDiffer>true</organismsDiffer>
    <experiments>2</experiments>
</comment>
<comment type="interaction">
    <interactant intactId="EBI-715576">
        <id>Q9UQL6</id>
    </interactant>
    <interactant intactId="EBI-6148881">
        <id>P08393</id>
        <label>ICP0</label>
    </interactant>
    <organismsDiffer>true</organismsDiffer>
    <experiments>3</experiments>
</comment>
<comment type="subcellular location">
    <subcellularLocation>
        <location>Nucleus</location>
    </subcellularLocation>
    <subcellularLocation>
        <location>Cytoplasm</location>
    </subcellularLocation>
    <text>Shuttles between the nucleus and the cytoplasm. In muscle cells, it shuttles into the cytoplasm during myocyte differentiation. The export to cytoplasm depends on the interaction with a 14-3-3 chaperone protein and is due to its phosphorylation at Ser-259 and Ser-498 by AMPK, CaMK1 and SIK1.</text>
</comment>
<comment type="alternative products">
    <event type="alternative splicing"/>
    <isoform>
        <id>Q9UQL6-1</id>
        <name>1</name>
        <sequence type="displayed"/>
    </isoform>
    <isoform>
        <id>Q9UQL6-2</id>
        <name>2</name>
        <sequence type="described" ref="VSP_002081"/>
    </isoform>
    <isoform>
        <id>Q9UQL6-3</id>
        <name>3</name>
        <sequence type="described" ref="VSP_039180"/>
    </isoform>
</comment>
<comment type="tissue specificity">
    <text>Ubiquitous.</text>
</comment>
<comment type="domain">
    <text evidence="1">The nuclear export sequence mediates the shuttling between the nucleus and the cytoplasm.</text>
</comment>
<comment type="PTM">
    <text evidence="1">Phosphorylated by AMPK, CaMK1, SIK1 and PRKD1 at Ser-259 and Ser-498. The phosphorylation is required for the export to the cytoplasm and inhibition. Phosphorylated by the PKC kinases PKN1 and PKN2, impairing nuclear import. Phosphorylated by GRK5, leading to nuclear export of HDAC5 and allowing MEF2-mediated transcription (By similarity).</text>
</comment>
<comment type="PTM">
    <text evidence="8">Ubiquitinated. Polyubiquitination however does not lead to its degradation.</text>
</comment>
<comment type="similarity">
    <text evidence="22">Belongs to the histone deacetylase family. HD type 2 subfamily.</text>
</comment>
<comment type="sequence caution" evidence="22">
    <conflict type="frameshift">
        <sequence resource="EMBL-CDS" id="AAC18040"/>
    </conflict>
</comment>
<comment type="sequence caution" evidence="22">
    <conflict type="erroneous initiation">
        <sequence resource="EMBL-CDS" id="BAA25526"/>
    </conflict>
    <text>Extended N-terminus.</text>
</comment>
<proteinExistence type="evidence at protein level"/>
<sequence>MNSPNESDGMSGREPSLEILPRTSLHSIPVTVEVKPVLPRAMPSSMGGGGGGSPSPVELRGALVGSVDPTLREQQLQQELLALKQQQQLQKQLLFAEFQKQHDHLTRQHEVQLQKHLKQQQEMLAAKQQQEMLAAKRQQELEQQRQREQQRQEELEKQRLEQQLLILRNKEKSKESAIASTEVKLRLQEFLLSKSKEPTPGGLNHSLPQHPKCWGAHHASLDQSSPPQSGPPGTPPSYKLPLPGPYDSRDDFPLRKTASEPNLKVRSRLKQKVAERRSSPLLRRKDGTVISTFKKRAVEITGAGPGASSVCNSAPGSGPSSPNSSHSTIAENGFTGSVPNIPTEMLPQHRALPLDSSPNQFSLYTSPSLPNISLGLQATVTVTNSHLTASPKLSTQQEAERQALQSLRQGGTLTGKFMSTSSIPGCLLGVALEGDGSPHGHASLLQHVLLLEQARQQSTLIAVPLHGQSPLVTGERVATSMRTVGKLPRHRPLSRTQSSPLPQSPQALQQLVMQQQHQQFLEKQKQQQLQLGKILTKTGELPRQPTTHPEETEEELTEQQEVLLGEGALTMPREGSTESESTQEDLEEEDEEDDGEEEEDCIQVKDEEGESGAEEGPDLEEPGAGYKKLFSDAQPLQPLQVYQAPLSLATVPHQALGRTQSSPAAPGGMKSPPDQPVKHLFTTGVVYDTFMLKHQCMCGNTHVHPEHAGRIQSIWSRLQETGLLSKCERIRGRKATLDEIQTVHSEYHTLLYGTSPLNRQKLDSKKLLGPISQKMYAVLPCGGIGVDSDTVWNEMHSSSAVRMAVGCLLELAFKVAAGELKNGFAIIRPPGHHAEESTAMGFCFFNSVAITAKLLQQKLNVGKVLIVDWDIHHGNGTQQAFYNDPSVLYISLHRYDNGNFFPGSGAPEEVGGGPGVGYNVNVAWTGGVDPPIGDVEYLTAFRTVVMPIAHEFSPDVVLVSAGFDAVEGHLSPLGGYSVTARCFGHLTRQLMTLAGGRVVLALEGGHDLTAICDASEACVSALLSVELQPLDEAVLQQKPNINAVATLEKVIEIQSKHWSCVQKFAAGLGRSLREAQAGETEEAETVSAMALLSVGAEQAQAAAAREHSPRPAEEPMEQEPAL</sequence>
<protein>
    <recommendedName>
        <fullName>Histone deacetylase 5</fullName>
        <shortName>HD5</shortName>
        <ecNumber>3.5.1.98</ecNumber>
    </recommendedName>
    <alternativeName>
        <fullName>Antigen NY-CO-9</fullName>
    </alternativeName>
</protein>
<evidence type="ECO:0000250" key="1"/>
<evidence type="ECO:0000250" key="2">
    <source>
        <dbReference type="UniProtKB" id="Q9Z2V6"/>
    </source>
</evidence>
<evidence type="ECO:0000256" key="3">
    <source>
        <dbReference type="SAM" id="MobiDB-lite"/>
    </source>
</evidence>
<evidence type="ECO:0000269" key="4">
    <source>
    </source>
</evidence>
<evidence type="ECO:0000269" key="5">
    <source>
    </source>
</evidence>
<evidence type="ECO:0000269" key="6">
    <source>
    </source>
</evidence>
<evidence type="ECO:0000269" key="7">
    <source>
    </source>
</evidence>
<evidence type="ECO:0000269" key="8">
    <source>
    </source>
</evidence>
<evidence type="ECO:0000269" key="9">
    <source>
    </source>
</evidence>
<evidence type="ECO:0000269" key="10">
    <source>
    </source>
</evidence>
<evidence type="ECO:0000269" key="11">
    <source>
    </source>
</evidence>
<evidence type="ECO:0000269" key="12">
    <source>
    </source>
</evidence>
<evidence type="ECO:0000269" key="13">
    <source>
    </source>
</evidence>
<evidence type="ECO:0000269" key="14">
    <source>
    </source>
</evidence>
<evidence type="ECO:0000269" key="15">
    <source>
    </source>
</evidence>
<evidence type="ECO:0000269" key="16">
    <source>
    </source>
</evidence>
<evidence type="ECO:0000269" key="17">
    <source>
    </source>
</evidence>
<evidence type="ECO:0000269" key="18">
    <source>
    </source>
</evidence>
<evidence type="ECO:0000269" key="19">
    <source>
    </source>
</evidence>
<evidence type="ECO:0000303" key="20">
    <source>
    </source>
</evidence>
<evidence type="ECO:0000303" key="21">
    <source ref="6"/>
</evidence>
<evidence type="ECO:0000305" key="22"/>
<evidence type="ECO:0007744" key="23">
    <source>
    </source>
</evidence>
<evidence type="ECO:0007744" key="24">
    <source>
    </source>
</evidence>
<evidence type="ECO:0007744" key="25">
    <source>
    </source>
</evidence>
<evidence type="ECO:0007829" key="26">
    <source>
        <dbReference type="PDB" id="5UWI"/>
    </source>
</evidence>
<gene>
    <name type="primary">HDAC5</name>
    <name type="synonym">KIAA0600</name>
</gene>
<dbReference type="EC" id="3.5.1.98"/>
<dbReference type="EMBL" id="AF132608">
    <property type="protein sequence ID" value="AAD29047.1"/>
    <property type="molecule type" value="mRNA"/>
</dbReference>
<dbReference type="EMBL" id="AB011172">
    <property type="protein sequence ID" value="BAA25526.2"/>
    <property type="status" value="ALT_INIT"/>
    <property type="molecule type" value="mRNA"/>
</dbReference>
<dbReference type="EMBL" id="AC023855">
    <property type="status" value="NOT_ANNOTATED_CDS"/>
    <property type="molecule type" value="Genomic_DNA"/>
</dbReference>
<dbReference type="EMBL" id="BC013140">
    <property type="protein sequence ID" value="AAH13140.1"/>
    <property type="status" value="ALT_TERM"/>
    <property type="molecule type" value="mRNA"/>
</dbReference>
<dbReference type="EMBL" id="BC051824">
    <property type="protein sequence ID" value="AAH51824.1"/>
    <property type="molecule type" value="mRNA"/>
</dbReference>
<dbReference type="EMBL" id="BX458255">
    <property type="status" value="NOT_ANNOTATED_CDS"/>
    <property type="molecule type" value="mRNA"/>
</dbReference>
<dbReference type="EMBL" id="AF039691">
    <property type="protein sequence ID" value="AAC18040.1"/>
    <property type="status" value="ALT_FRAME"/>
    <property type="molecule type" value="mRNA"/>
</dbReference>
<dbReference type="EMBL" id="BK000028">
    <property type="protein sequence ID" value="DAA00017.1"/>
    <property type="molecule type" value="Genomic_DNA"/>
</dbReference>
<dbReference type="CCDS" id="CCDS32663.1">
    <molecule id="Q9UQL6-3"/>
</dbReference>
<dbReference type="CCDS" id="CCDS45696.1">
    <molecule id="Q9UQL6-1"/>
</dbReference>
<dbReference type="RefSeq" id="NP_001015053.1">
    <molecule id="Q9UQL6-3"/>
    <property type="nucleotide sequence ID" value="NM_001015053.2"/>
</dbReference>
<dbReference type="RefSeq" id="NP_001369322.1">
    <molecule id="Q9UQL6-1"/>
    <property type="nucleotide sequence ID" value="NM_001382393.1"/>
</dbReference>
<dbReference type="RefSeq" id="NP_005465.2">
    <molecule id="Q9UQL6-1"/>
    <property type="nucleotide sequence ID" value="NM_005474.5"/>
</dbReference>
<dbReference type="RefSeq" id="XP_005256963.1">
    <property type="nucleotide sequence ID" value="XM_005256906.4"/>
</dbReference>
<dbReference type="RefSeq" id="XP_047291003.1">
    <molecule id="Q9UQL6-3"/>
    <property type="nucleotide sequence ID" value="XM_047435047.1"/>
</dbReference>
<dbReference type="PDB" id="5UWI">
    <property type="method" value="X-ray"/>
    <property type="resolution" value="2.14 A"/>
    <property type="chains" value="D=1078-1095"/>
</dbReference>
<dbReference type="PDB" id="8Q9P">
    <property type="method" value="X-ray"/>
    <property type="resolution" value="2.20 A"/>
    <property type="chains" value="X=179-195"/>
</dbReference>
<dbReference type="PDBsum" id="5UWI"/>
<dbReference type="PDBsum" id="8Q9P"/>
<dbReference type="SMR" id="Q9UQL6"/>
<dbReference type="BioGRID" id="115331">
    <property type="interactions" value="367"/>
</dbReference>
<dbReference type="CORUM" id="Q9UQL6"/>
<dbReference type="DIP" id="DIP-38260N"/>
<dbReference type="ELM" id="Q9UQL6"/>
<dbReference type="FunCoup" id="Q9UQL6">
    <property type="interactions" value="2922"/>
</dbReference>
<dbReference type="IntAct" id="Q9UQL6">
    <property type="interactions" value="42"/>
</dbReference>
<dbReference type="MINT" id="Q9UQL6"/>
<dbReference type="STRING" id="9606.ENSP00000225983"/>
<dbReference type="BindingDB" id="Q9UQL6"/>
<dbReference type="ChEMBL" id="CHEMBL2563"/>
<dbReference type="DrugBank" id="DB12565">
    <property type="generic name" value="Abexinostat"/>
</dbReference>
<dbReference type="DrugBank" id="DB05015">
    <property type="generic name" value="Belinostat"/>
</dbReference>
<dbReference type="DrugBank" id="DB01262">
    <property type="generic name" value="Decitabine"/>
</dbReference>
<dbReference type="DrugBank" id="DB11841">
    <property type="generic name" value="Entinostat"/>
</dbReference>
<dbReference type="DrugBank" id="DB12645">
    <property type="generic name" value="Givinostat"/>
</dbReference>
<dbReference type="DrugBank" id="DB14979">
    <property type="generic name" value="Martinostat"/>
</dbReference>
<dbReference type="DrugBank" id="DB06603">
    <property type="generic name" value="Panobinostat"/>
</dbReference>
<dbReference type="DrugBank" id="DB06819">
    <property type="generic name" value="Phenylbutyric acid"/>
</dbReference>
<dbReference type="DrugBank" id="DB03766">
    <property type="generic name" value="Propanoic acid"/>
</dbReference>
<dbReference type="DrugBank" id="DB12847">
    <property type="generic name" value="Pyroxamide"/>
</dbReference>
<dbReference type="DrugBank" id="DB06176">
    <property type="generic name" value="Romidepsin"/>
</dbReference>
<dbReference type="DrugBank" id="DB00313">
    <property type="generic name" value="Valproic acid"/>
</dbReference>
<dbReference type="DrugBank" id="DB02546">
    <property type="generic name" value="Vorinostat"/>
</dbReference>
<dbReference type="DrugCentral" id="Q9UQL6"/>
<dbReference type="GuidetoPHARMACOLOGY" id="2660"/>
<dbReference type="GlyGen" id="Q9UQL6">
    <property type="glycosylation" value="2 sites"/>
</dbReference>
<dbReference type="iPTMnet" id="Q9UQL6"/>
<dbReference type="PhosphoSitePlus" id="Q9UQL6"/>
<dbReference type="BioMuta" id="HDAC5"/>
<dbReference type="DMDM" id="296434519"/>
<dbReference type="jPOST" id="Q9UQL6"/>
<dbReference type="MassIVE" id="Q9UQL6"/>
<dbReference type="PaxDb" id="9606-ENSP00000225983"/>
<dbReference type="PeptideAtlas" id="Q9UQL6"/>
<dbReference type="ProteomicsDB" id="85556">
    <molecule id="Q9UQL6-1"/>
</dbReference>
<dbReference type="ProteomicsDB" id="85557">
    <molecule id="Q9UQL6-2"/>
</dbReference>
<dbReference type="ProteomicsDB" id="85558">
    <molecule id="Q9UQL6-3"/>
</dbReference>
<dbReference type="Pumba" id="Q9UQL6"/>
<dbReference type="Antibodypedia" id="3425">
    <property type="antibodies" value="755 antibodies from 44 providers"/>
</dbReference>
<dbReference type="DNASU" id="10014"/>
<dbReference type="Ensembl" id="ENST00000225983.10">
    <molecule id="Q9UQL6-3"/>
    <property type="protein sequence ID" value="ENSP00000225983.5"/>
    <property type="gene ID" value="ENSG00000108840.17"/>
</dbReference>
<dbReference type="Ensembl" id="ENST00000336057.9">
    <molecule id="Q9UQL6-2"/>
    <property type="protein sequence ID" value="ENSP00000337290.4"/>
    <property type="gene ID" value="ENSG00000108840.17"/>
</dbReference>
<dbReference type="Ensembl" id="ENST00000586802.5">
    <molecule id="Q9UQL6-1"/>
    <property type="protein sequence ID" value="ENSP00000468004.1"/>
    <property type="gene ID" value="ENSG00000108840.17"/>
</dbReference>
<dbReference type="Ensembl" id="ENST00000682912.1">
    <molecule id="Q9UQL6-1"/>
    <property type="protein sequence ID" value="ENSP00000507606.1"/>
    <property type="gene ID" value="ENSG00000108840.17"/>
</dbReference>
<dbReference type="Ensembl" id="ENST00000715273.1">
    <molecule id="Q9UQL6-1"/>
    <property type="protein sequence ID" value="ENSP00000520442.1"/>
    <property type="gene ID" value="ENSG00000108840.17"/>
</dbReference>
<dbReference type="GeneID" id="10014"/>
<dbReference type="KEGG" id="hsa:10014"/>
<dbReference type="MANE-Select" id="ENST00000682912.1">
    <property type="protein sequence ID" value="ENSP00000507606.1"/>
    <property type="RefSeq nucleotide sequence ID" value="NM_005474.5"/>
    <property type="RefSeq protein sequence ID" value="NP_005465.2"/>
</dbReference>
<dbReference type="UCSC" id="uc002ifd.2">
    <molecule id="Q9UQL6-1"/>
    <property type="organism name" value="human"/>
</dbReference>
<dbReference type="AGR" id="HGNC:14068"/>
<dbReference type="CTD" id="10014"/>
<dbReference type="DisGeNET" id="10014"/>
<dbReference type="GeneCards" id="HDAC5"/>
<dbReference type="HGNC" id="HGNC:14068">
    <property type="gene designation" value="HDAC5"/>
</dbReference>
<dbReference type="HPA" id="ENSG00000108840">
    <property type="expression patterns" value="Low tissue specificity"/>
</dbReference>
<dbReference type="MIM" id="605315">
    <property type="type" value="gene"/>
</dbReference>
<dbReference type="neXtProt" id="NX_Q9UQL6"/>
<dbReference type="OpenTargets" id="ENSG00000108840"/>
<dbReference type="PharmGKB" id="PA29230"/>
<dbReference type="VEuPathDB" id="HostDB:ENSG00000108840"/>
<dbReference type="eggNOG" id="KOG1343">
    <property type="taxonomic scope" value="Eukaryota"/>
</dbReference>
<dbReference type="GeneTree" id="ENSGT00940000160534"/>
<dbReference type="HOGENOM" id="CLU_006530_2_0_1"/>
<dbReference type="InParanoid" id="Q9UQL6"/>
<dbReference type="OMA" id="ANPHGHA"/>
<dbReference type="OrthoDB" id="424012at2759"/>
<dbReference type="PAN-GO" id="Q9UQL6">
    <property type="GO annotations" value="6 GO annotations based on evolutionary models"/>
</dbReference>
<dbReference type="PhylomeDB" id="Q9UQL6"/>
<dbReference type="TreeFam" id="TF106174"/>
<dbReference type="PathwayCommons" id="Q9UQL6"/>
<dbReference type="Reactome" id="R-HSA-2122947">
    <property type="pathway name" value="NOTCH1 Intracellular Domain Regulates Transcription"/>
</dbReference>
<dbReference type="Reactome" id="R-HSA-2644606">
    <property type="pathway name" value="Constitutive Signaling by NOTCH1 PEST Domain Mutants"/>
</dbReference>
<dbReference type="Reactome" id="R-HSA-2894862">
    <property type="pathway name" value="Constitutive Signaling by NOTCH1 HD+PEST Domain Mutants"/>
</dbReference>
<dbReference type="Reactome" id="R-HSA-350054">
    <property type="pathway name" value="Notch-HLH transcription pathway"/>
</dbReference>
<dbReference type="Reactome" id="R-HSA-8943724">
    <property type="pathway name" value="Regulation of PTEN gene transcription"/>
</dbReference>
<dbReference type="SignaLink" id="Q9UQL6"/>
<dbReference type="SIGNOR" id="Q9UQL6"/>
<dbReference type="BioGRID-ORCS" id="10014">
    <property type="hits" value="20 hits in 1176 CRISPR screens"/>
</dbReference>
<dbReference type="ChiTaRS" id="HDAC5">
    <property type="organism name" value="human"/>
</dbReference>
<dbReference type="GeneWiki" id="Histone_deacetylase_5"/>
<dbReference type="GenomeRNAi" id="10014"/>
<dbReference type="Pharos" id="Q9UQL6">
    <property type="development level" value="Tclin"/>
</dbReference>
<dbReference type="PRO" id="PR:Q9UQL6"/>
<dbReference type="Proteomes" id="UP000005640">
    <property type="component" value="Chromosome 17"/>
</dbReference>
<dbReference type="RNAct" id="Q9UQL6">
    <property type="molecule type" value="protein"/>
</dbReference>
<dbReference type="Bgee" id="ENSG00000108840">
    <property type="expression patterns" value="Expressed in cortical plate and 164 other cell types or tissues"/>
</dbReference>
<dbReference type="ExpressionAtlas" id="Q9UQL6">
    <property type="expression patterns" value="baseline and differential"/>
</dbReference>
<dbReference type="GO" id="GO:0005737">
    <property type="term" value="C:cytoplasm"/>
    <property type="evidence" value="ECO:0000314"/>
    <property type="project" value="BHF-UCL"/>
</dbReference>
<dbReference type="GO" id="GO:0005829">
    <property type="term" value="C:cytosol"/>
    <property type="evidence" value="ECO:0000314"/>
    <property type="project" value="HPA"/>
</dbReference>
<dbReference type="GO" id="GO:0005794">
    <property type="term" value="C:Golgi apparatus"/>
    <property type="evidence" value="ECO:0000314"/>
    <property type="project" value="HPA"/>
</dbReference>
<dbReference type="GO" id="GO:0000118">
    <property type="term" value="C:histone deacetylase complex"/>
    <property type="evidence" value="ECO:0000318"/>
    <property type="project" value="GO_Central"/>
</dbReference>
<dbReference type="GO" id="GO:0016607">
    <property type="term" value="C:nuclear speck"/>
    <property type="evidence" value="ECO:0000314"/>
    <property type="project" value="HPA"/>
</dbReference>
<dbReference type="GO" id="GO:0005654">
    <property type="term" value="C:nucleoplasm"/>
    <property type="evidence" value="ECO:0000304"/>
    <property type="project" value="Reactome"/>
</dbReference>
<dbReference type="GO" id="GO:0005634">
    <property type="term" value="C:nucleus"/>
    <property type="evidence" value="ECO:0000314"/>
    <property type="project" value="UniProtKB"/>
</dbReference>
<dbReference type="GO" id="GO:0003682">
    <property type="term" value="F:chromatin binding"/>
    <property type="evidence" value="ECO:0007669"/>
    <property type="project" value="Ensembl"/>
</dbReference>
<dbReference type="GO" id="GO:0001216">
    <property type="term" value="F:DNA-binding transcription activator activity"/>
    <property type="evidence" value="ECO:0000315"/>
    <property type="project" value="ARUK-UCL"/>
</dbReference>
<dbReference type="GO" id="GO:0140297">
    <property type="term" value="F:DNA-binding transcription factor binding"/>
    <property type="evidence" value="ECO:0000353"/>
    <property type="project" value="BHF-UCL"/>
</dbReference>
<dbReference type="GO" id="GO:0004407">
    <property type="term" value="F:histone deacetylase activity"/>
    <property type="evidence" value="ECO:0000314"/>
    <property type="project" value="BHF-UCL"/>
</dbReference>
<dbReference type="GO" id="GO:0141221">
    <property type="term" value="F:histone deacetylase activity, hydrolytic mechanism"/>
    <property type="evidence" value="ECO:0007669"/>
    <property type="project" value="UniProtKB-EC"/>
</dbReference>
<dbReference type="GO" id="GO:0042826">
    <property type="term" value="F:histone deacetylase binding"/>
    <property type="evidence" value="ECO:0000353"/>
    <property type="project" value="UniProtKB"/>
</dbReference>
<dbReference type="GO" id="GO:0042802">
    <property type="term" value="F:identical protein binding"/>
    <property type="evidence" value="ECO:0000353"/>
    <property type="project" value="IntAct"/>
</dbReference>
<dbReference type="GO" id="GO:0046872">
    <property type="term" value="F:metal ion binding"/>
    <property type="evidence" value="ECO:0007669"/>
    <property type="project" value="UniProtKB-KW"/>
</dbReference>
<dbReference type="GO" id="GO:0005080">
    <property type="term" value="F:protein kinase C binding"/>
    <property type="evidence" value="ECO:0000353"/>
    <property type="project" value="UniProtKB"/>
</dbReference>
<dbReference type="GO" id="GO:0033558">
    <property type="term" value="F:protein lysine deacetylase activity"/>
    <property type="evidence" value="ECO:0000315"/>
    <property type="project" value="UniProtKB"/>
</dbReference>
<dbReference type="GO" id="GO:0000978">
    <property type="term" value="F:RNA polymerase II cis-regulatory region sequence-specific DNA binding"/>
    <property type="evidence" value="ECO:0000314"/>
    <property type="project" value="UniProtKB"/>
</dbReference>
<dbReference type="GO" id="GO:0061629">
    <property type="term" value="F:RNA polymerase II-specific DNA-binding transcription factor binding"/>
    <property type="evidence" value="ECO:0000353"/>
    <property type="project" value="UniProtKB"/>
</dbReference>
<dbReference type="GO" id="GO:0001222">
    <property type="term" value="F:transcription corepressor binding"/>
    <property type="evidence" value="ECO:0000353"/>
    <property type="project" value="UniProtKB"/>
</dbReference>
<dbReference type="GO" id="GO:0042113">
    <property type="term" value="P:B cell activation"/>
    <property type="evidence" value="ECO:0000304"/>
    <property type="project" value="UniProtKB"/>
</dbReference>
<dbReference type="GO" id="GO:0030183">
    <property type="term" value="P:B cell differentiation"/>
    <property type="evidence" value="ECO:0000304"/>
    <property type="project" value="UniProtKB"/>
</dbReference>
<dbReference type="GO" id="GO:0032869">
    <property type="term" value="P:cellular response to insulin stimulus"/>
    <property type="evidence" value="ECO:0000303"/>
    <property type="project" value="BHF-UCL"/>
</dbReference>
<dbReference type="GO" id="GO:0071222">
    <property type="term" value="P:cellular response to lipopolysaccharide"/>
    <property type="evidence" value="ECO:0007669"/>
    <property type="project" value="Ensembl"/>
</dbReference>
<dbReference type="GO" id="GO:0040029">
    <property type="term" value="P:epigenetic regulation of gene expression"/>
    <property type="evidence" value="ECO:0000318"/>
    <property type="project" value="GO_Central"/>
</dbReference>
<dbReference type="GO" id="GO:0006954">
    <property type="term" value="P:inflammatory response"/>
    <property type="evidence" value="ECO:0000304"/>
    <property type="project" value="UniProtKB"/>
</dbReference>
<dbReference type="GO" id="GO:0090051">
    <property type="term" value="P:negative regulation of cell migration involved in sprouting angiogenesis"/>
    <property type="evidence" value="ECO:0000315"/>
    <property type="project" value="BHF-UCL"/>
</dbReference>
<dbReference type="GO" id="GO:0045892">
    <property type="term" value="P:negative regulation of DNA-templated transcription"/>
    <property type="evidence" value="ECO:0000304"/>
    <property type="project" value="UniProtKB"/>
</dbReference>
<dbReference type="GO" id="GO:0045814">
    <property type="term" value="P:negative regulation of gene expression, epigenetic"/>
    <property type="evidence" value="ECO:0000303"/>
    <property type="project" value="UniProtKB"/>
</dbReference>
<dbReference type="GO" id="GO:0010832">
    <property type="term" value="P:negative regulation of myotube differentiation"/>
    <property type="evidence" value="ECO:0000315"/>
    <property type="project" value="BHF-UCL"/>
</dbReference>
<dbReference type="GO" id="GO:0000122">
    <property type="term" value="P:negative regulation of transcription by RNA polymerase II"/>
    <property type="evidence" value="ECO:0000314"/>
    <property type="project" value="BHF-UCL"/>
</dbReference>
<dbReference type="GO" id="GO:0030182">
    <property type="term" value="P:neuron differentiation"/>
    <property type="evidence" value="ECO:0007669"/>
    <property type="project" value="Ensembl"/>
</dbReference>
<dbReference type="GO" id="GO:0045944">
    <property type="term" value="P:positive regulation of transcription by RNA polymerase II"/>
    <property type="evidence" value="ECO:0000315"/>
    <property type="project" value="BHF-UCL"/>
</dbReference>
<dbReference type="GO" id="GO:0010830">
    <property type="term" value="P:regulation of myotube differentiation"/>
    <property type="evidence" value="ECO:0000250"/>
    <property type="project" value="UniProtKB"/>
</dbReference>
<dbReference type="GO" id="GO:0014823">
    <property type="term" value="P:response to activity"/>
    <property type="evidence" value="ECO:0007669"/>
    <property type="project" value="Ensembl"/>
</dbReference>
<dbReference type="GO" id="GO:0042220">
    <property type="term" value="P:response to cocaine"/>
    <property type="evidence" value="ECO:0007669"/>
    <property type="project" value="Ensembl"/>
</dbReference>
<dbReference type="GO" id="GO:0009410">
    <property type="term" value="P:response to xenobiotic stimulus"/>
    <property type="evidence" value="ECO:0007669"/>
    <property type="project" value="Ensembl"/>
</dbReference>
<dbReference type="CDD" id="cd10164">
    <property type="entry name" value="ClassIIa_HDAC5_Gln-rich-N"/>
    <property type="match status" value="1"/>
</dbReference>
<dbReference type="CDD" id="cd10007">
    <property type="entry name" value="HDAC5"/>
    <property type="match status" value="1"/>
</dbReference>
<dbReference type="FunFam" id="3.40.800.20:FF:000002">
    <property type="entry name" value="Histone deacetylase"/>
    <property type="match status" value="1"/>
</dbReference>
<dbReference type="Gene3D" id="6.10.250.1550">
    <property type="match status" value="1"/>
</dbReference>
<dbReference type="Gene3D" id="3.40.800.20">
    <property type="entry name" value="Histone deacetylase domain"/>
    <property type="match status" value="1"/>
</dbReference>
<dbReference type="InterPro" id="IPR046949">
    <property type="entry name" value="HDAC4/5/7/9"/>
</dbReference>
<dbReference type="InterPro" id="IPR000286">
    <property type="entry name" value="His_deacetylse"/>
</dbReference>
<dbReference type="InterPro" id="IPR023801">
    <property type="entry name" value="His_deacetylse_dom"/>
</dbReference>
<dbReference type="InterPro" id="IPR037138">
    <property type="entry name" value="His_deacetylse_dom_sf"/>
</dbReference>
<dbReference type="InterPro" id="IPR024643">
    <property type="entry name" value="Hist_deacetylase_Gln_rich_N"/>
</dbReference>
<dbReference type="InterPro" id="IPR023696">
    <property type="entry name" value="Ureohydrolase_dom_sf"/>
</dbReference>
<dbReference type="PANTHER" id="PTHR45364:SF12">
    <property type="entry name" value="HISTONE DEACETYLASE"/>
    <property type="match status" value="1"/>
</dbReference>
<dbReference type="PANTHER" id="PTHR45364">
    <property type="entry name" value="HISTONE DEACETYLASE 9-RELATED"/>
    <property type="match status" value="1"/>
</dbReference>
<dbReference type="Pfam" id="PF12203">
    <property type="entry name" value="HDAC4_Gln"/>
    <property type="match status" value="1"/>
</dbReference>
<dbReference type="Pfam" id="PF00850">
    <property type="entry name" value="Hist_deacetyl"/>
    <property type="match status" value="1"/>
</dbReference>
<dbReference type="PIRSF" id="PIRSF037911">
    <property type="entry name" value="HDAC_II_euk"/>
    <property type="match status" value="1"/>
</dbReference>
<dbReference type="PRINTS" id="PR01270">
    <property type="entry name" value="HDASUPER"/>
</dbReference>
<dbReference type="SUPFAM" id="SSF52768">
    <property type="entry name" value="Arginase/deacetylase"/>
    <property type="match status" value="1"/>
</dbReference>
<reference key="1">
    <citation type="journal article" date="1999" name="Proc. Natl. Acad. Sci. U.S.A.">
        <title>Three proteins define a class of human histone deacetylases related to yeast Hda1p.</title>
        <authorList>
            <person name="Grozinger C.M."/>
            <person name="Hassig C.A."/>
            <person name="Schreiber S.L."/>
        </authorList>
    </citation>
    <scope>NUCLEOTIDE SEQUENCE [MRNA] (ISOFORM 1)</scope>
</reference>
<reference key="2">
    <citation type="journal article" date="1998" name="DNA Res.">
        <title>Prediction of the coding sequences of unidentified human genes. IX. The complete sequences of 100 new cDNA clones from brain which can code for large proteins in vitro.</title>
        <authorList>
            <person name="Nagase T."/>
            <person name="Ishikawa K."/>
            <person name="Miyajima N."/>
            <person name="Tanaka A."/>
            <person name="Kotani H."/>
            <person name="Nomura N."/>
            <person name="Ohara O."/>
        </authorList>
    </citation>
    <scope>NUCLEOTIDE SEQUENCE [LARGE SCALE MRNA] (ISOFORM 2)</scope>
    <source>
        <tissue>Brain</tissue>
    </source>
</reference>
<reference key="3">
    <citation type="journal article" date="2002" name="DNA Res.">
        <title>Construction of expression-ready cDNA clones for KIAA genes: manual curation of 330 KIAA cDNA clones.</title>
        <authorList>
            <person name="Nakajima D."/>
            <person name="Okazaki N."/>
            <person name="Yamakawa H."/>
            <person name="Kikuno R."/>
            <person name="Ohara O."/>
            <person name="Nagase T."/>
        </authorList>
    </citation>
    <scope>SEQUENCE REVISION</scope>
</reference>
<reference key="4">
    <citation type="journal article" date="2006" name="Nature">
        <title>DNA sequence of human chromosome 17 and analysis of rearrangement in the human lineage.</title>
        <authorList>
            <person name="Zody M.C."/>
            <person name="Garber M."/>
            <person name="Adams D.J."/>
            <person name="Sharpe T."/>
            <person name="Harrow J."/>
            <person name="Lupski J.R."/>
            <person name="Nicholson C."/>
            <person name="Searle S.M."/>
            <person name="Wilming L."/>
            <person name="Young S.K."/>
            <person name="Abouelleil A."/>
            <person name="Allen N.R."/>
            <person name="Bi W."/>
            <person name="Bloom T."/>
            <person name="Borowsky M.L."/>
            <person name="Bugalter B.E."/>
            <person name="Butler J."/>
            <person name="Chang J.L."/>
            <person name="Chen C.-K."/>
            <person name="Cook A."/>
            <person name="Corum B."/>
            <person name="Cuomo C.A."/>
            <person name="de Jong P.J."/>
            <person name="DeCaprio D."/>
            <person name="Dewar K."/>
            <person name="FitzGerald M."/>
            <person name="Gilbert J."/>
            <person name="Gibson R."/>
            <person name="Gnerre S."/>
            <person name="Goldstein S."/>
            <person name="Grafham D.V."/>
            <person name="Grocock R."/>
            <person name="Hafez N."/>
            <person name="Hagopian D.S."/>
            <person name="Hart E."/>
            <person name="Norman C.H."/>
            <person name="Humphray S."/>
            <person name="Jaffe D.B."/>
            <person name="Jones M."/>
            <person name="Kamal M."/>
            <person name="Khodiyar V.K."/>
            <person name="LaButti K."/>
            <person name="Laird G."/>
            <person name="Lehoczky J."/>
            <person name="Liu X."/>
            <person name="Lokyitsang T."/>
            <person name="Loveland J."/>
            <person name="Lui A."/>
            <person name="Macdonald P."/>
            <person name="Major J.E."/>
            <person name="Matthews L."/>
            <person name="Mauceli E."/>
            <person name="McCarroll S.A."/>
            <person name="Mihalev A.H."/>
            <person name="Mudge J."/>
            <person name="Nguyen C."/>
            <person name="Nicol R."/>
            <person name="O'Leary S.B."/>
            <person name="Osoegawa K."/>
            <person name="Schwartz D.C."/>
            <person name="Shaw-Smith C."/>
            <person name="Stankiewicz P."/>
            <person name="Steward C."/>
            <person name="Swarbreck D."/>
            <person name="Venkataraman V."/>
            <person name="Whittaker C.A."/>
            <person name="Yang X."/>
            <person name="Zimmer A.R."/>
            <person name="Bradley A."/>
            <person name="Hubbard T."/>
            <person name="Birren B.W."/>
            <person name="Rogers J."/>
            <person name="Lander E.S."/>
            <person name="Nusbaum C."/>
        </authorList>
    </citation>
    <scope>NUCLEOTIDE SEQUENCE [LARGE SCALE GENOMIC DNA]</scope>
</reference>
<reference key="5">
    <citation type="journal article" date="2004" name="Genome Res.">
        <title>The status, quality, and expansion of the NIH full-length cDNA project: the Mammalian Gene Collection (MGC).</title>
        <authorList>
            <consortium name="The MGC Project Team"/>
        </authorList>
    </citation>
    <scope>NUCLEOTIDE SEQUENCE [LARGE SCALE MRNA] (ISOFORM 1)</scope>
    <source>
        <tissue>Eye</tissue>
        <tissue>Testis</tissue>
    </source>
</reference>
<reference key="6">
    <citation type="submission" date="2004-03" db="EMBL/GenBank/DDBJ databases">
        <title>Full-length cDNA libraries and normalization.</title>
        <authorList>
            <person name="Li W.B."/>
            <person name="Gruber C."/>
            <person name="Jessee J."/>
            <person name="Polayes D."/>
        </authorList>
    </citation>
    <scope>NUCLEOTIDE SEQUENCE [LARGE SCALE MRNA] OF 1-176 (ISOFORM 3)</scope>
    <source>
        <tissue>Neuroblastoma</tissue>
    </source>
</reference>
<reference key="7">
    <citation type="journal article" date="1998" name="Int. J. Cancer">
        <title>Characterization of human colon cancer antigens recognized by autologous antibodies.</title>
        <authorList>
            <person name="Scanlan M.J."/>
            <person name="Chen Y.-T."/>
            <person name="Williamson B."/>
            <person name="Gure A.O."/>
            <person name="Stockert E."/>
            <person name="Gordan J.D."/>
            <person name="Tuereci O."/>
            <person name="Sahin U."/>
            <person name="Pfreundschuh M."/>
            <person name="Old L.J."/>
        </authorList>
    </citation>
    <scope>NUCLEOTIDE SEQUENCE [MRNA] OF 189-1122 (ISOFORM 1)</scope>
    <source>
        <tissue>Colon carcinoma</tissue>
    </source>
</reference>
<reference key="8">
    <citation type="journal article" date="2000" name="Biochim. Biophys. Acta">
        <title>Chromosomal organization and localization of the human histone deacetylase 5 gene (HDAC5).</title>
        <authorList>
            <person name="Mahlknecht U."/>
            <person name="Schnittger S."/>
            <person name="Ottmann O.G."/>
            <person name="Schoch C."/>
            <person name="Mosebach M."/>
            <person name="Hiddemann W."/>
            <person name="Hoelzer D."/>
        </authorList>
    </citation>
    <scope>GENE ORGANIZATION</scope>
</reference>
<reference key="9">
    <citation type="journal article" date="2000" name="Genes Dev.">
        <title>BCoR, a novel corepressor involved in BCL-6 repression.</title>
        <authorList>
            <person name="Huynh K.D."/>
            <person name="Fischle W."/>
            <person name="Verdin E."/>
            <person name="Bardwell V.J."/>
        </authorList>
    </citation>
    <scope>INTERACTION WITH BCOR</scope>
</reference>
<reference key="10">
    <citation type="journal article" date="2000" name="Nature">
        <title>Signal-dependent nuclear export of a histone deacetylase regulates muscle differentiation.</title>
        <authorList>
            <person name="McKinsey T.A."/>
            <person name="Zhang C.-L."/>
            <person name="Lu J."/>
            <person name="Olson E.N."/>
        </authorList>
    </citation>
    <scope>SUBCELLULAR LOCATION</scope>
    <scope>PHOSPHORYLATION</scope>
    <scope>MUTAGENESIS OF SER-259; SER-279; SER-498; SER-661 AND SER-713</scope>
</reference>
<reference key="11">
    <citation type="journal article" date="2000" name="Proc. Natl. Acad. Sci. U.S.A.">
        <title>Activation of the myocyte enhancer factor-2 transcription factor by calcium/calmodulin-dependent protein kinase-stimulated binding of 14-3-3 to histone deacetylase 5.</title>
        <authorList>
            <person name="McKinsey T.A."/>
            <person name="Zhang C.-L."/>
            <person name="Olson E.N."/>
        </authorList>
    </citation>
    <scope>INTERACTION WITH 14-3-3</scope>
    <scope>PHOSPHORYLATION AT SER-259 AND SER-498</scope>
</reference>
<reference key="12">
    <citation type="journal article" date="2001" name="Mol. Cell. Biol.">
        <title>Identification of a signal-responsive nuclear export sequence in class II histone deacetylases.</title>
        <authorList>
            <person name="McKinsey T.A."/>
            <person name="Zhang C.-L."/>
            <person name="Olson E.N."/>
        </authorList>
    </citation>
    <scope>NUCLEAR EXPORT SIGNAL</scope>
    <scope>MUTAGENESIS OF VAL-1086 AND LEU-1092</scope>
</reference>
<reference key="13">
    <citation type="journal article" date="2002" name="Proc. Natl. Acad. Sci. U.S.A.">
        <title>Histone deacetylase 6 binds polyubiquitin through its zinc finger (PAZ domain) and copurifies with deubiquitinating enzymes.</title>
        <authorList>
            <person name="Hook S.S."/>
            <person name="Orian A."/>
            <person name="Cowley S.M."/>
            <person name="Eisenman R.N."/>
        </authorList>
    </citation>
    <scope>UBIQUITINATION</scope>
</reference>
<reference key="14">
    <citation type="journal article" date="2003" name="Biochem. Biophys. Res. Commun.">
        <title>Point mutations in BCL6 DNA-binding domain reveal distinct roles for the six zinc fingers.</title>
        <authorList>
            <person name="Mascle X."/>
            <person name="Albagli O."/>
            <person name="Lemercier C."/>
        </authorList>
    </citation>
    <scope>INTERACTION WITH BCL6</scope>
</reference>
<reference key="15">
    <citation type="journal article" date="2007" name="Int. J. Cancer">
        <title>Breast cancer associated transcriptional repressor PLU-1/JARID1B interacts directly with histone deacetylases.</title>
        <authorList>
            <person name="Barrett A."/>
            <person name="Santangelo S."/>
            <person name="Tan K."/>
            <person name="Catchpole S."/>
            <person name="Roberts K."/>
            <person name="Spencer-Dene B."/>
            <person name="Hall D."/>
            <person name="Scibetta A."/>
            <person name="Burchell J."/>
            <person name="Verdin E."/>
            <person name="Freemont P."/>
            <person name="Taylor-Papadimitriou J."/>
        </authorList>
    </citation>
    <scope>INTERACTION WITH KDM5B</scope>
</reference>
<reference key="16">
    <citation type="journal article" date="2007" name="J. Biol. Chem.">
        <title>Critical and functional regulation of CHOP (C/EBP homologous protein) through the N-terminal portion.</title>
        <authorList>
            <person name="Ohoka N."/>
            <person name="Hattori T."/>
            <person name="Kitagawa M."/>
            <person name="Onozaki K."/>
            <person name="Hayashi H."/>
        </authorList>
    </citation>
    <scope>INTERACTION WITH DDIT3</scope>
</reference>
<reference key="17">
    <citation type="journal article" date="2008" name="Diabetes">
        <title>AMP-activated protein kinase regulates GLUT4 transcription by phosphorylating histone deacetylase 5.</title>
        <authorList>
            <person name="McGee S.L."/>
            <person name="van Denderen B.J."/>
            <person name="Howlett K.F."/>
            <person name="Mollica J."/>
            <person name="Schertzer J.D."/>
            <person name="Kemp B.E."/>
            <person name="Hargreaves M."/>
        </authorList>
    </citation>
    <scope>PHOSPHORYLATION AT SER-259 AND SER-498</scope>
    <scope>SUBCELLULAR LOCATION</scope>
    <scope>MUTAGENESIS OF SER-259 AND SER-498</scope>
</reference>
<reference key="18">
    <citation type="journal article" date="2008" name="J. Biol. Chem.">
        <title>Protein kinase D-dependent phosphorylation and nuclear export of histone deacetylase 5 mediates vascular endothelial growth factor-induced gene expression and angiogenesis.</title>
        <authorList>
            <person name="Ha C.H."/>
            <person name="Wang W."/>
            <person name="Jhun B.S."/>
            <person name="Wong C."/>
            <person name="Hausser A."/>
            <person name="Pfizenmaier K."/>
            <person name="McKinsey T.A."/>
            <person name="Olson E.N."/>
            <person name="Jin Z.G."/>
        </authorList>
    </citation>
    <scope>PHOSPHORYLATION AT SER-259 AND SER-498</scope>
</reference>
<reference key="19">
    <citation type="journal article" date="2009" name="Proc. Natl. Acad. Sci. U.S.A.">
        <title>Human BAHD1 promotes heterochromatic gene silencing.</title>
        <authorList>
            <person name="Bierne H."/>
            <person name="Tham T.N."/>
            <person name="Batsche E."/>
            <person name="Dumay A."/>
            <person name="Leguillou M."/>
            <person name="Kerneis-Golsteyn S."/>
            <person name="Regnault B."/>
            <person name="Seeler J.S."/>
            <person name="Muchardt C."/>
            <person name="Feunteun J."/>
            <person name="Cossart P."/>
        </authorList>
    </citation>
    <scope>INTERACTION WITH BAHD1</scope>
</reference>
<reference key="20">
    <citation type="journal article" date="2009" name="Science">
        <title>Lysine acetylation targets protein complexes and co-regulates major cellular functions.</title>
        <authorList>
            <person name="Choudhary C."/>
            <person name="Kumar C."/>
            <person name="Gnad F."/>
            <person name="Nielsen M.L."/>
            <person name="Rehman M."/>
            <person name="Walther T.C."/>
            <person name="Olsen J.V."/>
            <person name="Mann M."/>
        </authorList>
    </citation>
    <scope>ACETYLATION [LARGE SCALE ANALYSIS] AT LYS-533</scope>
    <scope>IDENTIFICATION BY MASS SPECTROMETRY [LARGE SCALE ANALYSIS]</scope>
</reference>
<reference key="21">
    <citation type="journal article" date="2010" name="FEBS Lett.">
        <title>Protein kinase C-related kinase targets nuclear localization signals in a subset of class IIa histone deacetylases.</title>
        <authorList>
            <person name="Harrison B.C."/>
            <person name="Huynh K."/>
            <person name="Lundgaard G.L."/>
            <person name="Helmke S.M."/>
            <person name="Perryman M.B."/>
            <person name="McKinsey T.A."/>
        </authorList>
    </citation>
    <scope>PHOSPHORYLATION AT THR-292</scope>
    <scope>MUTAGENESIS OF SER-259; SER-291 AND THR-292</scope>
</reference>
<reference key="22">
    <citation type="journal article" date="2011" name="BMC Syst. Biol.">
        <title>Initial characterization of the human central proteome.</title>
        <authorList>
            <person name="Burkard T.R."/>
            <person name="Planyavsky M."/>
            <person name="Kaupe I."/>
            <person name="Breitwieser F.P."/>
            <person name="Buerckstuemmer T."/>
            <person name="Bennett K.L."/>
            <person name="Superti-Furga G."/>
            <person name="Colinge J."/>
        </authorList>
    </citation>
    <scope>IDENTIFICATION BY MASS SPECTROMETRY [LARGE SCALE ANALYSIS]</scope>
</reference>
<reference key="23">
    <citation type="journal article" date="2012" name="Sci. Signal.">
        <title>Sequence-specific recognition of a PxLPxI/L motif by an ankyrin repeat tumbler lock.</title>
        <authorList>
            <person name="Xu C."/>
            <person name="Jin J."/>
            <person name="Bian C."/>
            <person name="Lam R."/>
            <person name="Tian R."/>
            <person name="Weist R."/>
            <person name="You L."/>
            <person name="Nie J."/>
            <person name="Bochkarev A."/>
            <person name="Tempel W."/>
            <person name="Tan C.S."/>
            <person name="Wasney G.A."/>
            <person name="Vedadi M."/>
            <person name="Gish G.D."/>
            <person name="Arrowsmith C.H."/>
            <person name="Pawson T."/>
            <person name="Yang X.J."/>
            <person name="Min J."/>
        </authorList>
    </citation>
    <scope>INTERACTION WITH ANKRA2</scope>
</reference>
<reference key="24">
    <citation type="journal article" date="2013" name="J. Proteome Res.">
        <title>Toward a comprehensive characterization of a human cancer cell phosphoproteome.</title>
        <authorList>
            <person name="Zhou H."/>
            <person name="Di Palma S."/>
            <person name="Preisinger C."/>
            <person name="Peng M."/>
            <person name="Polat A.N."/>
            <person name="Heck A.J."/>
            <person name="Mohammed S."/>
        </authorList>
    </citation>
    <scope>PHOSPHORYLATION [LARGE SCALE ANALYSIS] AT SER-611; SER-661 AND SER-1108</scope>
    <scope>IDENTIFICATION BY MASS SPECTROMETRY [LARGE SCALE ANALYSIS]</scope>
    <source>
        <tissue>Cervix carcinoma</tissue>
        <tissue>Erythroleukemia</tissue>
    </source>
</reference>
<reference key="25">
    <citation type="journal article" date="2014" name="Cancer Res.">
        <title>Differential regulation of estrogen receptor alpha expression in breast cancer cells by metastasis-associated protein 1.</title>
        <authorList>
            <person name="Kang H.J."/>
            <person name="Lee M.H."/>
            <person name="Kang H.L."/>
            <person name="Kim S.H."/>
            <person name="Ahn J.R."/>
            <person name="Na H."/>
            <person name="Na T.Y."/>
            <person name="Kim Y.N."/>
            <person name="Seong J.K."/>
            <person name="Lee M.O."/>
        </authorList>
    </citation>
    <scope>FUNCTION</scope>
    <scope>INTERACTION WITH EP300</scope>
</reference>
<reference key="26">
    <citation type="journal article" date="2014" name="J. Proteomics">
        <title>An enzyme assisted RP-RPLC approach for in-depth analysis of human liver phosphoproteome.</title>
        <authorList>
            <person name="Bian Y."/>
            <person name="Song C."/>
            <person name="Cheng K."/>
            <person name="Dong M."/>
            <person name="Wang F."/>
            <person name="Huang J."/>
            <person name="Sun D."/>
            <person name="Wang L."/>
            <person name="Ye M."/>
            <person name="Zou H."/>
        </authorList>
    </citation>
    <scope>IDENTIFICATION BY MASS SPECTROMETRY [LARGE SCALE ANALYSIS]</scope>
    <source>
        <tissue>Liver</tissue>
    </source>
</reference>
<reference key="27">
    <citation type="journal article" date="2015" name="Structure">
        <title>Ankyrin repeats of ANKRA2 recognize a PxLPxL motif on the 3M syndrome protein CCDC8.</title>
        <authorList>
            <person name="Nie J."/>
            <person name="Xu C."/>
            <person name="Jin J."/>
            <person name="Aka J.A."/>
            <person name="Tempel W."/>
            <person name="Nguyen V."/>
            <person name="You L."/>
            <person name="Weist R."/>
            <person name="Min J."/>
            <person name="Pawson T."/>
            <person name="Yang X.J."/>
        </authorList>
    </citation>
    <scope>INTERACTION WITH CUL7</scope>
</reference>
<reference key="28">
    <citation type="journal article" date="2017" name="Nat. Struct. Mol. Biol.">
        <title>Site-specific mapping of the human SUMO proteome reveals co-modification with phosphorylation.</title>
        <authorList>
            <person name="Hendriks I.A."/>
            <person name="Lyon D."/>
            <person name="Young C."/>
            <person name="Jensen L.J."/>
            <person name="Vertegaal A.C."/>
            <person name="Nielsen M.L."/>
        </authorList>
    </citation>
    <scope>SUMOYLATION [LARGE SCALE ANALYSIS] AT LYS-35</scope>
    <scope>IDENTIFICATION BY MASS SPECTROMETRY [LARGE SCALE ANALYSIS]</scope>
</reference>
<reference key="29">
    <citation type="journal article" date="2017" name="Proc. Natl. Acad. Sci. U.S.A.">
        <title>MicroRNA-10a is crucial for endothelial response to different flow patterns via interaction of retinoid acid receptors and histone deacetylases.</title>
        <authorList>
            <person name="Lee D.Y."/>
            <person name="Lin T.E."/>
            <person name="Lee C.I."/>
            <person name="Zhou J."/>
            <person name="Huang Y.H."/>
            <person name="Lee P.L."/>
            <person name="Shih Y.T."/>
            <person name="Chien S."/>
            <person name="Chiu J.J."/>
        </authorList>
    </citation>
    <scope>FUNCTION</scope>
    <scope>INTERACTION WITH RARA</scope>
</reference>
<name>HDAC5_HUMAN</name>
<organism>
    <name type="scientific">Homo sapiens</name>
    <name type="common">Human</name>
    <dbReference type="NCBI Taxonomy" id="9606"/>
    <lineage>
        <taxon>Eukaryota</taxon>
        <taxon>Metazoa</taxon>
        <taxon>Chordata</taxon>
        <taxon>Craniata</taxon>
        <taxon>Vertebrata</taxon>
        <taxon>Euteleostomi</taxon>
        <taxon>Mammalia</taxon>
        <taxon>Eutheria</taxon>
        <taxon>Euarchontoglires</taxon>
        <taxon>Primates</taxon>
        <taxon>Haplorrhini</taxon>
        <taxon>Catarrhini</taxon>
        <taxon>Hominidae</taxon>
        <taxon>Homo</taxon>
    </lineage>
</organism>
<feature type="chain" id="PRO_0000114701" description="Histone deacetylase 5">
    <location>
        <begin position="1"/>
        <end position="1122"/>
    </location>
</feature>
<feature type="region of interest" description="Disordered" evidence="3">
    <location>
        <begin position="1"/>
        <end position="24"/>
    </location>
</feature>
<feature type="region of interest" description="Disordered" evidence="3">
    <location>
        <begin position="41"/>
        <end position="60"/>
    </location>
</feature>
<feature type="region of interest" description="Disordered" evidence="3">
    <location>
        <begin position="196"/>
        <end position="281"/>
    </location>
</feature>
<feature type="region of interest" description="Disordered" evidence="3">
    <location>
        <begin position="302"/>
        <end position="343"/>
    </location>
</feature>
<feature type="region of interest" description="Disordered" evidence="3">
    <location>
        <begin position="481"/>
        <end position="504"/>
    </location>
</feature>
<feature type="region of interest" description="Disordered" evidence="3">
    <location>
        <begin position="536"/>
        <end position="625"/>
    </location>
</feature>
<feature type="region of interest" description="Histone deacetylase">
    <location>
        <begin position="684"/>
        <end position="1028"/>
    </location>
</feature>
<feature type="region of interest" description="Disordered" evidence="3">
    <location>
        <begin position="1097"/>
        <end position="1122"/>
    </location>
</feature>
<feature type="short sequence motif" description="Nuclear export signal">
    <location>
        <begin position="1081"/>
        <end position="1122"/>
    </location>
</feature>
<feature type="compositionally biased region" description="Basic and acidic residues" evidence="3">
    <location>
        <begin position="247"/>
        <end position="258"/>
    </location>
</feature>
<feature type="compositionally biased region" description="Basic and acidic residues" evidence="3">
    <location>
        <begin position="272"/>
        <end position="281"/>
    </location>
</feature>
<feature type="compositionally biased region" description="Low complexity" evidence="3">
    <location>
        <begin position="312"/>
        <end position="327"/>
    </location>
</feature>
<feature type="compositionally biased region" description="Polar residues" evidence="3">
    <location>
        <begin position="328"/>
        <end position="340"/>
    </location>
</feature>
<feature type="compositionally biased region" description="Low complexity" evidence="3">
    <location>
        <begin position="494"/>
        <end position="504"/>
    </location>
</feature>
<feature type="compositionally biased region" description="Acidic residues" evidence="3">
    <location>
        <begin position="581"/>
        <end position="621"/>
    </location>
</feature>
<feature type="compositionally biased region" description="Basic and acidic residues" evidence="3">
    <location>
        <begin position="1104"/>
        <end position="1113"/>
    </location>
</feature>
<feature type="active site" evidence="1">
    <location>
        <position position="833"/>
    </location>
</feature>
<feature type="binding site" evidence="1">
    <location>
        <position position="696"/>
    </location>
    <ligand>
        <name>Zn(2+)</name>
        <dbReference type="ChEBI" id="CHEBI:29105"/>
    </ligand>
</feature>
<feature type="binding site" evidence="1">
    <location>
        <position position="698"/>
    </location>
    <ligand>
        <name>Zn(2+)</name>
        <dbReference type="ChEBI" id="CHEBI:29105"/>
    </ligand>
</feature>
<feature type="binding site" evidence="1">
    <location>
        <position position="704"/>
    </location>
    <ligand>
        <name>Zn(2+)</name>
        <dbReference type="ChEBI" id="CHEBI:29105"/>
    </ligand>
</feature>
<feature type="binding site" evidence="1">
    <location>
        <position position="781"/>
    </location>
    <ligand>
        <name>Zn(2+)</name>
        <dbReference type="ChEBI" id="CHEBI:29105"/>
    </ligand>
</feature>
<feature type="modified residue" description="Phosphoserine; by AMPK, CaMK1, SIK1 and PKD/PRKD1" evidence="6 12 13">
    <location>
        <position position="259"/>
    </location>
</feature>
<feature type="modified residue" description="Phosphothreonine; by PKC" evidence="15">
    <location>
        <position position="292"/>
    </location>
</feature>
<feature type="modified residue" description="Phosphoserine; by AMPK, CaMK1, SIK1 and PKD/PRKD1" evidence="6 12 13">
    <location>
        <position position="498"/>
    </location>
</feature>
<feature type="modified residue" description="N6-acetyllysine" evidence="23">
    <location>
        <position position="533"/>
    </location>
</feature>
<feature type="modified residue" description="Phosphoserine" evidence="24">
    <location>
        <position position="611"/>
    </location>
</feature>
<feature type="modified residue" description="Phosphoserine" evidence="24">
    <location>
        <position position="661"/>
    </location>
</feature>
<feature type="modified residue" description="Phosphoserine" evidence="24">
    <location>
        <position position="1108"/>
    </location>
</feature>
<feature type="cross-link" description="Glycyl lysine isopeptide (Lys-Gly) (interchain with G-Cter in SUMO2)" evidence="25">
    <location>
        <position position="35"/>
    </location>
</feature>
<feature type="splice variant" id="VSP_039180" description="In isoform 3." evidence="21">
    <original>S</original>
    <variation>SA</variation>
    <location>
        <position position="7"/>
    </location>
</feature>
<feature type="splice variant" id="VSP_002081" description="In isoform 2." evidence="20">
    <location>
        <begin position="684"/>
        <end position="768"/>
    </location>
</feature>
<feature type="sequence variant" id="VAR_055903" description="In dbSNP:rs438096.">
    <original>R</original>
    <variation>Q</variation>
    <location>
        <position position="137"/>
    </location>
</feature>
<feature type="sequence variant" id="VAR_055904" description="In dbSNP:rs33916560.">
    <original>G</original>
    <variation>A</variation>
    <location>
        <position position="565"/>
    </location>
</feature>
<feature type="mutagenesis site" description="Reduces AMPK- and caMK-dependent phosphorylation and the subsequent nuclear export. Abolishes nuclear export; when associated with A-498. Does not affect phosphorylation by PKN1 and PKN2." evidence="5 12 15">
    <original>S</original>
    <variation>A</variation>
    <location>
        <position position="259"/>
    </location>
</feature>
<feature type="mutagenesis site" description="No effect." evidence="5">
    <original>S</original>
    <variation>A</variation>
    <location>
        <position position="279"/>
    </location>
</feature>
<feature type="mutagenesis site" description="Does not affect phosphorylation by PKC." evidence="15">
    <original>S</original>
    <variation>A</variation>
    <location>
        <position position="291"/>
    </location>
</feature>
<feature type="mutagenesis site" description="Abolishes phosphorylation by PKC." evidence="15">
    <original>T</original>
    <variation>A</variation>
    <location>
        <position position="292"/>
    </location>
</feature>
<feature type="mutagenesis site" description="Reduces AMPK- and CaMK-dependent phosphorylation and the subsequent nuclear export. Abolishes nuclear export; when associated with A-259." evidence="5 12">
    <original>S</original>
    <variation>A</variation>
    <location>
        <position position="498"/>
    </location>
</feature>
<feature type="mutagenesis site" description="No effect." evidence="5">
    <original>S</original>
    <variation>A</variation>
    <location>
        <position position="661"/>
    </location>
</feature>
<feature type="mutagenesis site" description="No effect." evidence="5">
    <original>S</original>
    <variation>A</variation>
    <location>
        <position position="713"/>
    </location>
</feature>
<feature type="mutagenesis site" description="Reduces CaMK-dependent nuclear export." evidence="7">
    <original>V</original>
    <variation>A</variation>
    <location>
        <position position="1086"/>
    </location>
</feature>
<feature type="mutagenesis site" description="Reduces CaMK-dependent nuclear export." evidence="7">
    <original>L</original>
    <variation>A</variation>
    <location>
        <position position="1092"/>
    </location>
</feature>
<feature type="sequence conflict" description="In Ref. 6; BX458255." evidence="22" ref="6">
    <original>V</original>
    <variation>L</variation>
    <location>
        <position position="37"/>
    </location>
</feature>
<feature type="sequence conflict" description="In Ref. 6; BX458255." evidence="22" ref="6">
    <original>Q</original>
    <variation>R</variation>
    <location>
        <position position="139"/>
    </location>
</feature>
<feature type="sequence conflict" description="In Ref. 6; BX458255." evidence="22" ref="6">
    <original>R</original>
    <variation>G</variation>
    <location>
        <position position="147"/>
    </location>
</feature>
<feature type="sequence conflict" description="In Ref. 1; AAD29047, 5; AAH51824 and 7; AAC18040." evidence="22" ref="1 5 7">
    <original>D</original>
    <variation>E</variation>
    <location>
        <position position="593"/>
    </location>
</feature>
<feature type="sequence conflict" description="In Ref. 7; AAC18040." evidence="22" ref="7">
    <original>S</original>
    <variation>N</variation>
    <location>
        <position position="671"/>
    </location>
</feature>
<feature type="sequence conflict" description="In Ref. 7; AAC18040." evidence="22" ref="7">
    <original>G</original>
    <variation>S</variation>
    <location>
        <position position="684"/>
    </location>
</feature>
<feature type="sequence conflict" description="In Ref. 7; AAC18040." evidence="22" ref="7">
    <original>E</original>
    <variation>K</variation>
    <location>
        <position position="1026"/>
    </location>
</feature>
<feature type="sequence conflict" description="In Ref. 7; AAC18040." evidence="22" ref="7">
    <original>E</original>
    <variation>G</variation>
    <location>
        <position position="1074"/>
    </location>
</feature>
<feature type="sequence conflict" description="In Ref. 7; AAC18040." evidence="22" ref="7">
    <original>S</original>
    <variation>L</variation>
    <location>
        <position position="1093"/>
    </location>
</feature>
<feature type="helix" evidence="26">
    <location>
        <begin position="1083"/>
        <end position="1090"/>
    </location>
</feature>